<accession>A3MT40</accession>
<organism>
    <name type="scientific">Pyrobaculum calidifontis (strain DSM 21063 / JCM 11548 / VA1)</name>
    <dbReference type="NCBI Taxonomy" id="410359"/>
    <lineage>
        <taxon>Archaea</taxon>
        <taxon>Thermoproteota</taxon>
        <taxon>Thermoprotei</taxon>
        <taxon>Thermoproteales</taxon>
        <taxon>Thermoproteaceae</taxon>
        <taxon>Pyrobaculum</taxon>
    </lineage>
</organism>
<protein>
    <recommendedName>
        <fullName evidence="1">Putative [LysW]-aminoadipate/[LysW]-glutamate kinase</fullName>
        <ecNumber evidence="1">2.7.2.17</ecNumber>
        <ecNumber evidence="1">2.7.2.19</ecNumber>
    </recommendedName>
</protein>
<keyword id="KW-0028">Amino-acid biosynthesis</keyword>
<keyword id="KW-0055">Arginine biosynthesis</keyword>
<keyword id="KW-0067">ATP-binding</keyword>
<keyword id="KW-0963">Cytoplasm</keyword>
<keyword id="KW-0418">Kinase</keyword>
<keyword id="KW-0457">Lysine biosynthesis</keyword>
<keyword id="KW-0547">Nucleotide-binding</keyword>
<keyword id="KW-0808">Transferase</keyword>
<gene>
    <name evidence="1" type="primary">lysZ</name>
    <name type="ordered locus">Pcal_0372</name>
</gene>
<dbReference type="EC" id="2.7.2.17" evidence="1"/>
<dbReference type="EC" id="2.7.2.19" evidence="1"/>
<dbReference type="EMBL" id="CP000561">
    <property type="protein sequence ID" value="ABO07807.1"/>
    <property type="molecule type" value="Genomic_DNA"/>
</dbReference>
<dbReference type="RefSeq" id="WP_011849064.1">
    <property type="nucleotide sequence ID" value="NC_009073.1"/>
</dbReference>
<dbReference type="SMR" id="A3MT40"/>
<dbReference type="STRING" id="410359.Pcal_0372"/>
<dbReference type="GeneID" id="4908696"/>
<dbReference type="KEGG" id="pcl:Pcal_0372"/>
<dbReference type="eggNOG" id="arCOG00862">
    <property type="taxonomic scope" value="Archaea"/>
</dbReference>
<dbReference type="HOGENOM" id="CLU_053680_2_0_2"/>
<dbReference type="OrthoDB" id="6816at2157"/>
<dbReference type="UniPathway" id="UPA00033">
    <property type="reaction ID" value="UER00036"/>
</dbReference>
<dbReference type="UniPathway" id="UPA00068"/>
<dbReference type="Proteomes" id="UP000001431">
    <property type="component" value="Chromosome"/>
</dbReference>
<dbReference type="GO" id="GO:0005737">
    <property type="term" value="C:cytoplasm"/>
    <property type="evidence" value="ECO:0007669"/>
    <property type="project" value="UniProtKB-SubCell"/>
</dbReference>
<dbReference type="GO" id="GO:0003991">
    <property type="term" value="F:acetylglutamate kinase activity"/>
    <property type="evidence" value="ECO:0007669"/>
    <property type="project" value="TreeGrafter"/>
</dbReference>
<dbReference type="GO" id="GO:0005524">
    <property type="term" value="F:ATP binding"/>
    <property type="evidence" value="ECO:0007669"/>
    <property type="project" value="UniProtKB-KW"/>
</dbReference>
<dbReference type="GO" id="GO:0043744">
    <property type="term" value="F:N2-acetyl-L-aminoadipate kinase activity"/>
    <property type="evidence" value="ECO:0007669"/>
    <property type="project" value="RHEA"/>
</dbReference>
<dbReference type="GO" id="GO:0042450">
    <property type="term" value="P:arginine biosynthetic process via ornithine"/>
    <property type="evidence" value="ECO:0007669"/>
    <property type="project" value="UniProtKB-UniRule"/>
</dbReference>
<dbReference type="GO" id="GO:0006526">
    <property type="term" value="P:L-arginine biosynthetic process"/>
    <property type="evidence" value="ECO:0007669"/>
    <property type="project" value="UniProtKB-UniPathway"/>
</dbReference>
<dbReference type="GO" id="GO:0019878">
    <property type="term" value="P:lysine biosynthetic process via aminoadipic acid"/>
    <property type="evidence" value="ECO:0007669"/>
    <property type="project" value="UniProtKB-UniRule"/>
</dbReference>
<dbReference type="CDD" id="cd04251">
    <property type="entry name" value="AAK_NAGK-UC"/>
    <property type="match status" value="1"/>
</dbReference>
<dbReference type="Gene3D" id="3.40.1160.10">
    <property type="entry name" value="Acetylglutamate kinase-like"/>
    <property type="match status" value="1"/>
</dbReference>
<dbReference type="HAMAP" id="MF_02082">
    <property type="entry name" value="LysZ"/>
    <property type="match status" value="1"/>
</dbReference>
<dbReference type="InterPro" id="IPR036393">
    <property type="entry name" value="AceGlu_kinase-like_sf"/>
</dbReference>
<dbReference type="InterPro" id="IPR004662">
    <property type="entry name" value="AcgluKinase_fam"/>
</dbReference>
<dbReference type="InterPro" id="IPR001048">
    <property type="entry name" value="Asp/Glu/Uridylate_kinase"/>
</dbReference>
<dbReference type="InterPro" id="IPR001057">
    <property type="entry name" value="Glu/AcGlu_kinase"/>
</dbReference>
<dbReference type="InterPro" id="IPR037529">
    <property type="entry name" value="LysZ"/>
</dbReference>
<dbReference type="NCBIfam" id="TIGR00761">
    <property type="entry name" value="argB"/>
    <property type="match status" value="1"/>
</dbReference>
<dbReference type="NCBIfam" id="NF010662">
    <property type="entry name" value="PRK14058.1-4"/>
    <property type="match status" value="1"/>
</dbReference>
<dbReference type="PANTHER" id="PTHR23342">
    <property type="entry name" value="N-ACETYLGLUTAMATE SYNTHASE"/>
    <property type="match status" value="1"/>
</dbReference>
<dbReference type="PANTHER" id="PTHR23342:SF0">
    <property type="entry name" value="N-ACETYLGLUTAMATE SYNTHASE, MITOCHONDRIAL"/>
    <property type="match status" value="1"/>
</dbReference>
<dbReference type="Pfam" id="PF00696">
    <property type="entry name" value="AA_kinase"/>
    <property type="match status" value="1"/>
</dbReference>
<dbReference type="PIRSF" id="PIRSF000728">
    <property type="entry name" value="NAGK"/>
    <property type="match status" value="1"/>
</dbReference>
<dbReference type="PRINTS" id="PR00474">
    <property type="entry name" value="GLU5KINASE"/>
</dbReference>
<dbReference type="SUPFAM" id="SSF53633">
    <property type="entry name" value="Carbamate kinase-like"/>
    <property type="match status" value="1"/>
</dbReference>
<reference key="1">
    <citation type="submission" date="2007-02" db="EMBL/GenBank/DDBJ databases">
        <title>Complete sequence of Pyrobaculum calidifontis JCM 11548.</title>
        <authorList>
            <consortium name="US DOE Joint Genome Institute"/>
            <person name="Copeland A."/>
            <person name="Lucas S."/>
            <person name="Lapidus A."/>
            <person name="Barry K."/>
            <person name="Glavina del Rio T."/>
            <person name="Dalin E."/>
            <person name="Tice H."/>
            <person name="Pitluck S."/>
            <person name="Chain P."/>
            <person name="Malfatti S."/>
            <person name="Shin M."/>
            <person name="Vergez L."/>
            <person name="Schmutz J."/>
            <person name="Larimer F."/>
            <person name="Land M."/>
            <person name="Hauser L."/>
            <person name="Kyrpides N."/>
            <person name="Mikhailova N."/>
            <person name="Cozen A.E."/>
            <person name="Fitz-Gibbon S.T."/>
            <person name="House C.H."/>
            <person name="Saltikov C."/>
            <person name="Lowe T.M."/>
            <person name="Richardson P."/>
        </authorList>
    </citation>
    <scope>NUCLEOTIDE SEQUENCE [LARGE SCALE GENOMIC DNA]</scope>
    <source>
        <strain>DSM 21063 / JCM 11548 / VA1</strain>
    </source>
</reference>
<comment type="function">
    <text evidence="1">Involved in both the arginine and lysine biosynthetic pathways. Phosphorylates the LysW-bound precursors glutamate (for arginine biosynthesis), respectively alpha-aminoadipate (for lysine biosynthesis).</text>
</comment>
<comment type="catalytic activity">
    <reaction evidence="1">
        <text>[amino-group carrier protein]-C-terminal-N-(1,4-dicarboxybutan-1-yl)-L-glutamine + ATP = [amino-group carrier protein]-C-terminal-N-(1-carboxy-5-phosphooxy-5-oxopentan-1-yl)-L-glutamine + ADP</text>
        <dbReference type="Rhea" id="RHEA:41944"/>
        <dbReference type="Rhea" id="RHEA-COMP:9694"/>
        <dbReference type="Rhea" id="RHEA-COMP:9712"/>
        <dbReference type="ChEBI" id="CHEBI:30616"/>
        <dbReference type="ChEBI" id="CHEBI:78499"/>
        <dbReference type="ChEBI" id="CHEBI:78503"/>
        <dbReference type="ChEBI" id="CHEBI:456216"/>
        <dbReference type="EC" id="2.7.2.17"/>
    </reaction>
</comment>
<comment type="catalytic activity">
    <reaction evidence="1">
        <text>[amino-group carrier protein]-C-terminal-gamma-(L-glutamyl)-L-glutamate + ATP = [amino-group carrier protein]-C-terminal-gamma-(5-phospho-L-glutamyl)-L-glutamate + ADP</text>
        <dbReference type="Rhea" id="RHEA:52632"/>
        <dbReference type="Rhea" id="RHEA-COMP:13311"/>
        <dbReference type="Rhea" id="RHEA-COMP:13313"/>
        <dbReference type="ChEBI" id="CHEBI:30616"/>
        <dbReference type="ChEBI" id="CHEBI:136714"/>
        <dbReference type="ChEBI" id="CHEBI:136717"/>
        <dbReference type="ChEBI" id="CHEBI:456216"/>
        <dbReference type="EC" id="2.7.2.19"/>
    </reaction>
</comment>
<comment type="pathway">
    <text evidence="1">Amino-acid biosynthesis; L-lysine biosynthesis via AAA pathway; L-lysine from L-alpha-aminoadipate (Thermus route): step 2/5.</text>
</comment>
<comment type="pathway">
    <text evidence="1">Amino-acid biosynthesis; L-arginine biosynthesis.</text>
</comment>
<comment type="subcellular location">
    <subcellularLocation>
        <location evidence="1">Cytoplasm</location>
    </subcellularLocation>
</comment>
<comment type="similarity">
    <text evidence="1">Belongs to the acetylglutamate kinase family. LysZ subfamily.</text>
</comment>
<sequence>MIVVKVGGSVICKDLSKVVENLPKYAGEAVVVHGGGCLVNELLKRMGIEPKFLTHPGGVVSRYTDLETLKVFVMAMSWINKQLVASLFARGVEAVGLTGADGGVVRARRKEKVLVVDERGRQRVVDGGYVGKIVDVNVKALAPPPLKVLAPIAVSEKGELLNVDGDQLAFEVAARAGAGRLVILSDVDGLILGGRVVPRLTPEEAEELAKSEEVRGGMKRKLLMAAEAARRGVEVVISNGLADSPIDAALGGAGTHISRNI</sequence>
<evidence type="ECO:0000255" key="1">
    <source>
        <dbReference type="HAMAP-Rule" id="MF_02082"/>
    </source>
</evidence>
<name>LYSZ_PYRCJ</name>
<proteinExistence type="inferred from homology"/>
<feature type="chain" id="PRO_1000010534" description="Putative [LysW]-aminoadipate/[LysW]-glutamate kinase">
    <location>
        <begin position="1"/>
        <end position="261"/>
    </location>
</feature>
<feature type="binding site" evidence="1">
    <location>
        <begin position="35"/>
        <end position="36"/>
    </location>
    <ligand>
        <name>substrate</name>
    </ligand>
</feature>
<feature type="binding site" evidence="1">
    <location>
        <position position="62"/>
    </location>
    <ligand>
        <name>substrate</name>
    </ligand>
</feature>
<feature type="binding site" evidence="1">
    <location>
        <position position="162"/>
    </location>
    <ligand>
        <name>substrate</name>
    </ligand>
</feature>
<feature type="site" description="Transition state stabilizer" evidence="1">
    <location>
        <position position="5"/>
    </location>
</feature>
<feature type="site" description="Transition state stabilizer" evidence="1">
    <location>
        <position position="221"/>
    </location>
</feature>